<gene>
    <name type="primary">apeA</name>
</gene>
<keyword id="KW-0031">Aminopeptidase</keyword>
<keyword id="KW-0378">Hydrolase</keyword>
<keyword id="KW-0479">Metal-binding</keyword>
<keyword id="KW-0482">Metalloprotease</keyword>
<keyword id="KW-0645">Protease</keyword>
<keyword id="KW-0862">Zinc</keyword>
<comment type="cofactor">
    <cofactor evidence="1">
        <name>Zn(2+)</name>
        <dbReference type="ChEBI" id="CHEBI:29105"/>
    </cofactor>
</comment>
<comment type="similarity">
    <text evidence="3">Belongs to the peptidase M18 family.</text>
</comment>
<protein>
    <recommendedName>
        <fullName>Probable M18 family aminopeptidase 1</fullName>
        <ecNumber>3.4.11.-</ecNumber>
    </recommendedName>
</protein>
<evidence type="ECO:0000250" key="1"/>
<evidence type="ECO:0000255" key="2"/>
<evidence type="ECO:0000305" key="3"/>
<proteinExistence type="inferred from homology"/>
<name>APEA_THENE</name>
<sequence>MKMERKNVWQHRNREEIESFSKEYMDFMGRAKTERLAVREIRKFLEKEGFVPIEDFAGDPMDMAVYAVNRGKAIAAFRVVDDLKKGLNLVVAHIDSPRLDFKPNPLVEDEQIALFKTHYYGGIKKYHWFNIPLEIHGVLFRGDGEEIEIHVGDKPEDPVFTIPDLLPHLDKEDAKISEKFKGENLMLIAGTIPLSGEEKEAVKMNVLKILNEMYGISEEDFVSGEIEVVPAFPPREVGIDRSLIGAYGQDDRICAYTALRAFLEANPKKSIGVVFLDKEEIGSDGNTGAKARFYLRVLRQILKIQGGPEIQNSHSMRYWKKSAVISGDVCAAVNPPYKDVHDLHNAPRSGYGVALVKYTGARGKYSTNDAHAEFVARVRQVLNERNVIWQVATLGKVDQGGGGTYAKFFAERGADVYDMGPALLGMHSPFEISSKADLFETYRAYRALLEDL</sequence>
<reference key="1">
    <citation type="submission" date="1998-07" db="EMBL/GenBank/DDBJ databases">
        <authorList>
            <person name="Zverlov V.V."/>
            <person name="Mashchenko O.V."/>
            <person name="Liebl W."/>
            <person name="Velikodvorskaya G.A."/>
        </authorList>
    </citation>
    <scope>NUCLEOTIDE SEQUENCE [GENOMIC DNA]</scope>
    <source>
        <strain>Z2706-MC24</strain>
    </source>
</reference>
<organism>
    <name type="scientific">Thermotoga neapolitana</name>
    <dbReference type="NCBI Taxonomy" id="2337"/>
    <lineage>
        <taxon>Bacteria</taxon>
        <taxon>Thermotogati</taxon>
        <taxon>Thermotogota</taxon>
        <taxon>Thermotogae</taxon>
        <taxon>Thermotogales</taxon>
        <taxon>Thermotogaceae</taxon>
        <taxon>Thermotoga</taxon>
    </lineage>
</organism>
<accession>O86957</accession>
<feature type="chain" id="PRO_0000173459" description="Probable M18 family aminopeptidase 1">
    <location>
        <begin position="1"/>
        <end position="452"/>
    </location>
</feature>
<feature type="binding site" evidence="2">
    <location>
        <position position="93"/>
    </location>
    <ligand>
        <name>Zn(2+)</name>
        <dbReference type="ChEBI" id="CHEBI:29105"/>
    </ligand>
</feature>
<feature type="binding site" evidence="2">
    <location>
        <position position="168"/>
    </location>
    <ligand>
        <name>Zn(2+)</name>
        <dbReference type="ChEBI" id="CHEBI:29105"/>
    </ligand>
</feature>
<feature type="binding site" evidence="2">
    <location>
        <position position="427"/>
    </location>
    <ligand>
        <name>Zn(2+)</name>
        <dbReference type="ChEBI" id="CHEBI:29105"/>
    </ligand>
</feature>
<dbReference type="EC" id="3.4.11.-"/>
<dbReference type="EMBL" id="AJ009831">
    <property type="protein sequence ID" value="CAA08865.1"/>
    <property type="molecule type" value="Genomic_DNA"/>
</dbReference>
<dbReference type="SMR" id="O86957"/>
<dbReference type="MEROPS" id="M18.004"/>
<dbReference type="GO" id="GO:0005737">
    <property type="term" value="C:cytoplasm"/>
    <property type="evidence" value="ECO:0007669"/>
    <property type="project" value="UniProtKB-ARBA"/>
</dbReference>
<dbReference type="GO" id="GO:0004177">
    <property type="term" value="F:aminopeptidase activity"/>
    <property type="evidence" value="ECO:0007669"/>
    <property type="project" value="UniProtKB-UniRule"/>
</dbReference>
<dbReference type="GO" id="GO:0008237">
    <property type="term" value="F:metallopeptidase activity"/>
    <property type="evidence" value="ECO:0007669"/>
    <property type="project" value="UniProtKB-UniRule"/>
</dbReference>
<dbReference type="GO" id="GO:0008270">
    <property type="term" value="F:zinc ion binding"/>
    <property type="evidence" value="ECO:0007669"/>
    <property type="project" value="UniProtKB-UniRule"/>
</dbReference>
<dbReference type="GO" id="GO:0006508">
    <property type="term" value="P:proteolysis"/>
    <property type="evidence" value="ECO:0007669"/>
    <property type="project" value="UniProtKB-UniRule"/>
</dbReference>
<dbReference type="FunFam" id="2.30.250.10:FF:000006">
    <property type="entry name" value="Probable M18 family aminopeptidase 1"/>
    <property type="match status" value="1"/>
</dbReference>
<dbReference type="Gene3D" id="2.30.250.10">
    <property type="entry name" value="Aminopeptidase i, Domain 2"/>
    <property type="match status" value="1"/>
</dbReference>
<dbReference type="Gene3D" id="3.40.630.10">
    <property type="entry name" value="Zn peptidases"/>
    <property type="match status" value="1"/>
</dbReference>
<dbReference type="HAMAP" id="MF_00466">
    <property type="entry name" value="Aminopeptidase_M18_1"/>
    <property type="match status" value="1"/>
</dbReference>
<dbReference type="InterPro" id="IPR022983">
    <property type="entry name" value="M18_aminopeptidase_1"/>
</dbReference>
<dbReference type="InterPro" id="IPR001948">
    <property type="entry name" value="Peptidase_M18"/>
</dbReference>
<dbReference type="InterPro" id="IPR023358">
    <property type="entry name" value="Peptidase_M18_dom2"/>
</dbReference>
<dbReference type="NCBIfam" id="NF002600">
    <property type="entry name" value="PRK02256.1"/>
    <property type="match status" value="1"/>
</dbReference>
<dbReference type="PANTHER" id="PTHR28570">
    <property type="entry name" value="ASPARTYL AMINOPEPTIDASE"/>
    <property type="match status" value="1"/>
</dbReference>
<dbReference type="PANTHER" id="PTHR28570:SF2">
    <property type="entry name" value="M18 FAMILY AMINOPEPTIDASE 1-RELATED"/>
    <property type="match status" value="1"/>
</dbReference>
<dbReference type="Pfam" id="PF02127">
    <property type="entry name" value="Peptidase_M18"/>
    <property type="match status" value="1"/>
</dbReference>
<dbReference type="PRINTS" id="PR00932">
    <property type="entry name" value="AMINO1PTASE"/>
</dbReference>
<dbReference type="SUPFAM" id="SSF101821">
    <property type="entry name" value="Aminopeptidase/glucanase lid domain"/>
    <property type="match status" value="1"/>
</dbReference>
<dbReference type="SUPFAM" id="SSF53187">
    <property type="entry name" value="Zn-dependent exopeptidases"/>
    <property type="match status" value="1"/>
</dbReference>